<reference key="1">
    <citation type="journal article" date="2004" name="Science">
        <title>Illuminating the evolutionary history of chlamydiae.</title>
        <authorList>
            <person name="Horn M."/>
            <person name="Collingro A."/>
            <person name="Schmitz-Esser S."/>
            <person name="Beier C.L."/>
            <person name="Purkhold U."/>
            <person name="Fartmann B."/>
            <person name="Brandt P."/>
            <person name="Nyakatura G.J."/>
            <person name="Droege M."/>
            <person name="Frishman D."/>
            <person name="Rattei T."/>
            <person name="Mewes H.-W."/>
            <person name="Wagner M."/>
        </authorList>
    </citation>
    <scope>NUCLEOTIDE SEQUENCE [LARGE SCALE GENOMIC DNA]</scope>
    <source>
        <strain>UWE25</strain>
    </source>
</reference>
<dbReference type="EC" id="2.1.3.15" evidence="1"/>
<dbReference type="EMBL" id="BX908798">
    <property type="protein sequence ID" value="CAF23888.1"/>
    <property type="molecule type" value="Genomic_DNA"/>
</dbReference>
<dbReference type="RefSeq" id="WP_011175714.1">
    <property type="nucleotide sequence ID" value="NC_005861.2"/>
</dbReference>
<dbReference type="SMR" id="Q6MC11"/>
<dbReference type="STRING" id="264201.pc1164"/>
<dbReference type="KEGG" id="pcu:PC_RS05610"/>
<dbReference type="eggNOG" id="COG0825">
    <property type="taxonomic scope" value="Bacteria"/>
</dbReference>
<dbReference type="HOGENOM" id="CLU_015486_0_2_0"/>
<dbReference type="OrthoDB" id="9808023at2"/>
<dbReference type="UniPathway" id="UPA00655">
    <property type="reaction ID" value="UER00711"/>
</dbReference>
<dbReference type="Proteomes" id="UP000000529">
    <property type="component" value="Chromosome"/>
</dbReference>
<dbReference type="GO" id="GO:0009317">
    <property type="term" value="C:acetyl-CoA carboxylase complex"/>
    <property type="evidence" value="ECO:0007669"/>
    <property type="project" value="InterPro"/>
</dbReference>
<dbReference type="GO" id="GO:0003989">
    <property type="term" value="F:acetyl-CoA carboxylase activity"/>
    <property type="evidence" value="ECO:0007669"/>
    <property type="project" value="InterPro"/>
</dbReference>
<dbReference type="GO" id="GO:0005524">
    <property type="term" value="F:ATP binding"/>
    <property type="evidence" value="ECO:0007669"/>
    <property type="project" value="UniProtKB-KW"/>
</dbReference>
<dbReference type="GO" id="GO:0016743">
    <property type="term" value="F:carboxyl- or carbamoyltransferase activity"/>
    <property type="evidence" value="ECO:0007669"/>
    <property type="project" value="UniProtKB-UniRule"/>
</dbReference>
<dbReference type="GO" id="GO:0006633">
    <property type="term" value="P:fatty acid biosynthetic process"/>
    <property type="evidence" value="ECO:0007669"/>
    <property type="project" value="UniProtKB-KW"/>
</dbReference>
<dbReference type="GO" id="GO:2001295">
    <property type="term" value="P:malonyl-CoA biosynthetic process"/>
    <property type="evidence" value="ECO:0007669"/>
    <property type="project" value="UniProtKB-UniRule"/>
</dbReference>
<dbReference type="Gene3D" id="3.90.226.10">
    <property type="entry name" value="2-enoyl-CoA Hydratase, Chain A, domain 1"/>
    <property type="match status" value="1"/>
</dbReference>
<dbReference type="HAMAP" id="MF_00823">
    <property type="entry name" value="AcetylCoA_CT_alpha"/>
    <property type="match status" value="1"/>
</dbReference>
<dbReference type="InterPro" id="IPR001095">
    <property type="entry name" value="Acetyl_CoA_COase_a_su"/>
</dbReference>
<dbReference type="InterPro" id="IPR029045">
    <property type="entry name" value="ClpP/crotonase-like_dom_sf"/>
</dbReference>
<dbReference type="InterPro" id="IPR011763">
    <property type="entry name" value="COA_CT_C"/>
</dbReference>
<dbReference type="NCBIfam" id="TIGR00513">
    <property type="entry name" value="accA"/>
    <property type="match status" value="1"/>
</dbReference>
<dbReference type="NCBIfam" id="NF041504">
    <property type="entry name" value="AccA_sub"/>
    <property type="match status" value="1"/>
</dbReference>
<dbReference type="NCBIfam" id="NF004344">
    <property type="entry name" value="PRK05724.1"/>
    <property type="match status" value="1"/>
</dbReference>
<dbReference type="PANTHER" id="PTHR42853">
    <property type="entry name" value="ACETYL-COENZYME A CARBOXYLASE CARBOXYL TRANSFERASE SUBUNIT ALPHA"/>
    <property type="match status" value="1"/>
</dbReference>
<dbReference type="PANTHER" id="PTHR42853:SF3">
    <property type="entry name" value="ACETYL-COENZYME A CARBOXYLASE CARBOXYL TRANSFERASE SUBUNIT ALPHA, CHLOROPLASTIC"/>
    <property type="match status" value="1"/>
</dbReference>
<dbReference type="Pfam" id="PF03255">
    <property type="entry name" value="ACCA"/>
    <property type="match status" value="1"/>
</dbReference>
<dbReference type="PRINTS" id="PR01069">
    <property type="entry name" value="ACCCTRFRASEA"/>
</dbReference>
<dbReference type="SUPFAM" id="SSF52096">
    <property type="entry name" value="ClpP/crotonase"/>
    <property type="match status" value="1"/>
</dbReference>
<dbReference type="PROSITE" id="PS50989">
    <property type="entry name" value="COA_CT_CTER"/>
    <property type="match status" value="1"/>
</dbReference>
<protein>
    <recommendedName>
        <fullName evidence="1">Acetyl-coenzyme A carboxylase carboxyl transferase subunit alpha</fullName>
        <shortName evidence="1">ACCase subunit alpha</shortName>
        <shortName evidence="1">Acetyl-CoA carboxylase carboxyltransferase subunit alpha</shortName>
        <ecNumber evidence="1">2.1.3.15</ecNumber>
    </recommendedName>
</protein>
<gene>
    <name evidence="1" type="primary">accA</name>
    <name type="ordered locus">pc1164</name>
</gene>
<keyword id="KW-0067">ATP-binding</keyword>
<keyword id="KW-0963">Cytoplasm</keyword>
<keyword id="KW-0275">Fatty acid biosynthesis</keyword>
<keyword id="KW-0276">Fatty acid metabolism</keyword>
<keyword id="KW-0444">Lipid biosynthesis</keyword>
<keyword id="KW-0443">Lipid metabolism</keyword>
<keyword id="KW-0547">Nucleotide-binding</keyword>
<keyword id="KW-1185">Reference proteome</keyword>
<keyword id="KW-0808">Transferase</keyword>
<name>ACCA_PARUW</name>
<comment type="function">
    <text evidence="1">Component of the acetyl coenzyme A carboxylase (ACC) complex. First, biotin carboxylase catalyzes the carboxylation of biotin on its carrier protein (BCCP) and then the CO(2) group is transferred by the carboxyltransferase to acetyl-CoA to form malonyl-CoA.</text>
</comment>
<comment type="catalytic activity">
    <reaction evidence="1">
        <text>N(6)-carboxybiotinyl-L-lysyl-[protein] + acetyl-CoA = N(6)-biotinyl-L-lysyl-[protein] + malonyl-CoA</text>
        <dbReference type="Rhea" id="RHEA:54728"/>
        <dbReference type="Rhea" id="RHEA-COMP:10505"/>
        <dbReference type="Rhea" id="RHEA-COMP:10506"/>
        <dbReference type="ChEBI" id="CHEBI:57288"/>
        <dbReference type="ChEBI" id="CHEBI:57384"/>
        <dbReference type="ChEBI" id="CHEBI:83144"/>
        <dbReference type="ChEBI" id="CHEBI:83145"/>
        <dbReference type="EC" id="2.1.3.15"/>
    </reaction>
</comment>
<comment type="pathway">
    <text evidence="1">Lipid metabolism; malonyl-CoA biosynthesis; malonyl-CoA from acetyl-CoA: step 1/1.</text>
</comment>
<comment type="subunit">
    <text evidence="1">Acetyl-CoA carboxylase is a heterohexamer composed of biotin carboxyl carrier protein (AccB), biotin carboxylase (AccC) and two subunits each of ACCase subunit alpha (AccA) and ACCase subunit beta (AccD).</text>
</comment>
<comment type="subcellular location">
    <subcellularLocation>
        <location evidence="1">Cytoplasm</location>
    </subcellularLocation>
</comment>
<comment type="similarity">
    <text evidence="1">Belongs to the AccA family.</text>
</comment>
<organism>
    <name type="scientific">Protochlamydia amoebophila (strain UWE25)</name>
    <dbReference type="NCBI Taxonomy" id="264201"/>
    <lineage>
        <taxon>Bacteria</taxon>
        <taxon>Pseudomonadati</taxon>
        <taxon>Chlamydiota</taxon>
        <taxon>Chlamydiia</taxon>
        <taxon>Parachlamydiales</taxon>
        <taxon>Parachlamydiaceae</taxon>
        <taxon>Candidatus Protochlamydia</taxon>
    </lineage>
</organism>
<sequence>MDILPHEKQIHEYIKTIEHLKKQSQDNPIFDVEIQKLEQKLDSLKQHVYSELTPWQRIMICRHPSRPHAVDFIRHLSESFVELAGDRSYREDHAIVGGLAKIGGIKCVVIGQEKGFDTESRVYRNFGMLNPEGFRKALRLMQMAEKFQLPIISLLDTPGAYPGLEAEERGQGWAIARNLREMMRINTPIIITIIGEGCSGGALGMGIGDVIGMLEHAYYSVISPEGCASILWKDASKNVEAASALKLNAEDLLNLKIIDSIIKEPLGGAHHDPHITYQNVKQFLVEQLHILRRIPSQILLEQRYLKFRQMGEFLEG</sequence>
<evidence type="ECO:0000255" key="1">
    <source>
        <dbReference type="HAMAP-Rule" id="MF_00823"/>
    </source>
</evidence>
<evidence type="ECO:0000255" key="2">
    <source>
        <dbReference type="PROSITE-ProRule" id="PRU01137"/>
    </source>
</evidence>
<feature type="chain" id="PRO_0000223795" description="Acetyl-coenzyme A carboxylase carboxyl transferase subunit alpha">
    <location>
        <begin position="1"/>
        <end position="316"/>
    </location>
</feature>
<feature type="domain" description="CoA carboxyltransferase C-terminal" evidence="2">
    <location>
        <begin position="36"/>
        <end position="290"/>
    </location>
</feature>
<accession>Q6MC11</accession>
<proteinExistence type="inferred from homology"/>